<comment type="function">
    <text evidence="1">Forms part of the ribosomal stalk which helps the ribosome interact with GTP-bound translation factors.</text>
</comment>
<comment type="subunit">
    <text evidence="1">Part of the ribosomal stalk of the 50S ribosomal subunit. Interacts with L10 and the large rRNA to form the base of the stalk. L10 forms an elongated spine to which L12 dimers bind in a sequential fashion forming a multimeric L10(L12)X complex.</text>
</comment>
<comment type="PTM">
    <text evidence="1">One or more lysine residues are methylated.</text>
</comment>
<comment type="similarity">
    <text evidence="1">Belongs to the universal ribosomal protein uL11 family.</text>
</comment>
<evidence type="ECO:0000255" key="1">
    <source>
        <dbReference type="HAMAP-Rule" id="MF_00736"/>
    </source>
</evidence>
<evidence type="ECO:0000305" key="2"/>
<organism>
    <name type="scientific">Campylobacter jejuni subsp. jejuni serotype O:23/36 (strain 81-176)</name>
    <dbReference type="NCBI Taxonomy" id="354242"/>
    <lineage>
        <taxon>Bacteria</taxon>
        <taxon>Pseudomonadati</taxon>
        <taxon>Campylobacterota</taxon>
        <taxon>Epsilonproteobacteria</taxon>
        <taxon>Campylobacterales</taxon>
        <taxon>Campylobacteraceae</taxon>
        <taxon>Campylobacter</taxon>
    </lineage>
</organism>
<accession>A1VYJ0</accession>
<gene>
    <name evidence="1" type="primary">rplK</name>
    <name type="ordered locus">CJJ81176_0505</name>
</gene>
<reference key="1">
    <citation type="submission" date="2006-12" db="EMBL/GenBank/DDBJ databases">
        <authorList>
            <person name="Fouts D.E."/>
            <person name="Nelson K.E."/>
            <person name="Sebastian Y."/>
        </authorList>
    </citation>
    <scope>NUCLEOTIDE SEQUENCE [LARGE SCALE GENOMIC DNA]</scope>
    <source>
        <strain>81-176</strain>
    </source>
</reference>
<protein>
    <recommendedName>
        <fullName evidence="1">Large ribosomal subunit protein uL11</fullName>
    </recommendedName>
    <alternativeName>
        <fullName evidence="2">50S ribosomal protein L11</fullName>
    </alternativeName>
</protein>
<proteinExistence type="inferred from homology"/>
<sequence>MAKKVVGEIKLQIAATKANPSPPVGPALGQQGVNIMEFCKAFNERTKDMAGFNIPVVITVYADKSFTFITKQPPATDLIKKAAGISKGTDNPLKNKVGKLTRAQVLEIVDKKIADLNTKDRDQAAKIIAGSARSMGVEIVD</sequence>
<name>RL11_CAMJJ</name>
<feature type="chain" id="PRO_1000046163" description="Large ribosomal subunit protein uL11">
    <location>
        <begin position="1"/>
        <end position="141"/>
    </location>
</feature>
<dbReference type="EMBL" id="CP000538">
    <property type="protein sequence ID" value="EAQ73126.1"/>
    <property type="molecule type" value="Genomic_DNA"/>
</dbReference>
<dbReference type="RefSeq" id="WP_002779452.1">
    <property type="nucleotide sequence ID" value="NC_008787.1"/>
</dbReference>
<dbReference type="SMR" id="A1VYJ0"/>
<dbReference type="GeneID" id="66544517"/>
<dbReference type="KEGG" id="cjj:CJJ81176_0505"/>
<dbReference type="eggNOG" id="COG0080">
    <property type="taxonomic scope" value="Bacteria"/>
</dbReference>
<dbReference type="HOGENOM" id="CLU_074237_2_0_7"/>
<dbReference type="Proteomes" id="UP000000646">
    <property type="component" value="Chromosome"/>
</dbReference>
<dbReference type="GO" id="GO:0022625">
    <property type="term" value="C:cytosolic large ribosomal subunit"/>
    <property type="evidence" value="ECO:0007669"/>
    <property type="project" value="TreeGrafter"/>
</dbReference>
<dbReference type="GO" id="GO:0070180">
    <property type="term" value="F:large ribosomal subunit rRNA binding"/>
    <property type="evidence" value="ECO:0007669"/>
    <property type="project" value="UniProtKB-UniRule"/>
</dbReference>
<dbReference type="GO" id="GO:0003735">
    <property type="term" value="F:structural constituent of ribosome"/>
    <property type="evidence" value="ECO:0007669"/>
    <property type="project" value="InterPro"/>
</dbReference>
<dbReference type="GO" id="GO:0006412">
    <property type="term" value="P:translation"/>
    <property type="evidence" value="ECO:0007669"/>
    <property type="project" value="UniProtKB-UniRule"/>
</dbReference>
<dbReference type="CDD" id="cd00349">
    <property type="entry name" value="Ribosomal_L11"/>
    <property type="match status" value="1"/>
</dbReference>
<dbReference type="FunFam" id="1.10.10.250:FF:000001">
    <property type="entry name" value="50S ribosomal protein L11"/>
    <property type="match status" value="1"/>
</dbReference>
<dbReference type="FunFam" id="3.30.1550.10:FF:000001">
    <property type="entry name" value="50S ribosomal protein L11"/>
    <property type="match status" value="1"/>
</dbReference>
<dbReference type="Gene3D" id="1.10.10.250">
    <property type="entry name" value="Ribosomal protein L11, C-terminal domain"/>
    <property type="match status" value="1"/>
</dbReference>
<dbReference type="Gene3D" id="3.30.1550.10">
    <property type="entry name" value="Ribosomal protein L11/L12, N-terminal domain"/>
    <property type="match status" value="1"/>
</dbReference>
<dbReference type="HAMAP" id="MF_00736">
    <property type="entry name" value="Ribosomal_uL11"/>
    <property type="match status" value="1"/>
</dbReference>
<dbReference type="InterPro" id="IPR000911">
    <property type="entry name" value="Ribosomal_uL11"/>
</dbReference>
<dbReference type="InterPro" id="IPR006519">
    <property type="entry name" value="Ribosomal_uL11_bac-typ"/>
</dbReference>
<dbReference type="InterPro" id="IPR020783">
    <property type="entry name" value="Ribosomal_uL11_C"/>
</dbReference>
<dbReference type="InterPro" id="IPR036769">
    <property type="entry name" value="Ribosomal_uL11_C_sf"/>
</dbReference>
<dbReference type="InterPro" id="IPR020785">
    <property type="entry name" value="Ribosomal_uL11_CS"/>
</dbReference>
<dbReference type="InterPro" id="IPR020784">
    <property type="entry name" value="Ribosomal_uL11_N"/>
</dbReference>
<dbReference type="InterPro" id="IPR036796">
    <property type="entry name" value="Ribosomal_uL11_N_sf"/>
</dbReference>
<dbReference type="NCBIfam" id="TIGR01632">
    <property type="entry name" value="L11_bact"/>
    <property type="match status" value="1"/>
</dbReference>
<dbReference type="PANTHER" id="PTHR11661">
    <property type="entry name" value="60S RIBOSOMAL PROTEIN L12"/>
    <property type="match status" value="1"/>
</dbReference>
<dbReference type="PANTHER" id="PTHR11661:SF1">
    <property type="entry name" value="LARGE RIBOSOMAL SUBUNIT PROTEIN UL11M"/>
    <property type="match status" value="1"/>
</dbReference>
<dbReference type="Pfam" id="PF00298">
    <property type="entry name" value="Ribosomal_L11"/>
    <property type="match status" value="1"/>
</dbReference>
<dbReference type="Pfam" id="PF03946">
    <property type="entry name" value="Ribosomal_L11_N"/>
    <property type="match status" value="1"/>
</dbReference>
<dbReference type="SMART" id="SM00649">
    <property type="entry name" value="RL11"/>
    <property type="match status" value="1"/>
</dbReference>
<dbReference type="SUPFAM" id="SSF54747">
    <property type="entry name" value="Ribosomal L11/L12e N-terminal domain"/>
    <property type="match status" value="1"/>
</dbReference>
<dbReference type="SUPFAM" id="SSF46906">
    <property type="entry name" value="Ribosomal protein L11, C-terminal domain"/>
    <property type="match status" value="1"/>
</dbReference>
<dbReference type="PROSITE" id="PS00359">
    <property type="entry name" value="RIBOSOMAL_L11"/>
    <property type="match status" value="1"/>
</dbReference>
<keyword id="KW-0488">Methylation</keyword>
<keyword id="KW-0687">Ribonucleoprotein</keyword>
<keyword id="KW-0689">Ribosomal protein</keyword>
<keyword id="KW-0694">RNA-binding</keyword>
<keyword id="KW-0699">rRNA-binding</keyword>